<accession>C1DCC1</accession>
<evidence type="ECO:0000255" key="1">
    <source>
        <dbReference type="HAMAP-Rule" id="MF_01227"/>
    </source>
</evidence>
<organism>
    <name type="scientific">Laribacter hongkongensis (strain HLHK9)</name>
    <dbReference type="NCBI Taxonomy" id="557598"/>
    <lineage>
        <taxon>Bacteria</taxon>
        <taxon>Pseudomonadati</taxon>
        <taxon>Pseudomonadota</taxon>
        <taxon>Betaproteobacteria</taxon>
        <taxon>Neisseriales</taxon>
        <taxon>Aquaspirillaceae</taxon>
        <taxon>Laribacter</taxon>
    </lineage>
</organism>
<feature type="chain" id="PRO_1000164947" description="CTP synthase">
    <location>
        <begin position="1"/>
        <end position="544"/>
    </location>
</feature>
<feature type="domain" description="Glutamine amidotransferase type-1" evidence="1">
    <location>
        <begin position="290"/>
        <end position="542"/>
    </location>
</feature>
<feature type="region of interest" description="Amidoligase domain" evidence="1">
    <location>
        <begin position="1"/>
        <end position="265"/>
    </location>
</feature>
<feature type="active site" description="Nucleophile; for glutamine hydrolysis" evidence="1">
    <location>
        <position position="378"/>
    </location>
</feature>
<feature type="active site" evidence="1">
    <location>
        <position position="515"/>
    </location>
</feature>
<feature type="active site" evidence="1">
    <location>
        <position position="517"/>
    </location>
</feature>
<feature type="binding site" evidence="1">
    <location>
        <position position="13"/>
    </location>
    <ligand>
        <name>CTP</name>
        <dbReference type="ChEBI" id="CHEBI:37563"/>
        <note>allosteric inhibitor</note>
    </ligand>
</feature>
<feature type="binding site" evidence="1">
    <location>
        <position position="13"/>
    </location>
    <ligand>
        <name>UTP</name>
        <dbReference type="ChEBI" id="CHEBI:46398"/>
    </ligand>
</feature>
<feature type="binding site" evidence="1">
    <location>
        <begin position="14"/>
        <end position="19"/>
    </location>
    <ligand>
        <name>ATP</name>
        <dbReference type="ChEBI" id="CHEBI:30616"/>
    </ligand>
</feature>
<feature type="binding site" evidence="1">
    <location>
        <position position="71"/>
    </location>
    <ligand>
        <name>ATP</name>
        <dbReference type="ChEBI" id="CHEBI:30616"/>
    </ligand>
</feature>
<feature type="binding site" evidence="1">
    <location>
        <position position="71"/>
    </location>
    <ligand>
        <name>Mg(2+)</name>
        <dbReference type="ChEBI" id="CHEBI:18420"/>
    </ligand>
</feature>
<feature type="binding site" evidence="1">
    <location>
        <position position="139"/>
    </location>
    <ligand>
        <name>Mg(2+)</name>
        <dbReference type="ChEBI" id="CHEBI:18420"/>
    </ligand>
</feature>
<feature type="binding site" evidence="1">
    <location>
        <begin position="146"/>
        <end position="148"/>
    </location>
    <ligand>
        <name>CTP</name>
        <dbReference type="ChEBI" id="CHEBI:37563"/>
        <note>allosteric inhibitor</note>
    </ligand>
</feature>
<feature type="binding site" evidence="1">
    <location>
        <begin position="186"/>
        <end position="191"/>
    </location>
    <ligand>
        <name>CTP</name>
        <dbReference type="ChEBI" id="CHEBI:37563"/>
        <note>allosteric inhibitor</note>
    </ligand>
</feature>
<feature type="binding site" evidence="1">
    <location>
        <begin position="186"/>
        <end position="191"/>
    </location>
    <ligand>
        <name>UTP</name>
        <dbReference type="ChEBI" id="CHEBI:46398"/>
    </ligand>
</feature>
<feature type="binding site" evidence="1">
    <location>
        <position position="222"/>
    </location>
    <ligand>
        <name>CTP</name>
        <dbReference type="ChEBI" id="CHEBI:37563"/>
        <note>allosteric inhibitor</note>
    </ligand>
</feature>
<feature type="binding site" evidence="1">
    <location>
        <position position="222"/>
    </location>
    <ligand>
        <name>UTP</name>
        <dbReference type="ChEBI" id="CHEBI:46398"/>
    </ligand>
</feature>
<feature type="binding site" evidence="1">
    <location>
        <position position="351"/>
    </location>
    <ligand>
        <name>L-glutamine</name>
        <dbReference type="ChEBI" id="CHEBI:58359"/>
    </ligand>
</feature>
<feature type="binding site" evidence="1">
    <location>
        <begin position="379"/>
        <end position="382"/>
    </location>
    <ligand>
        <name>L-glutamine</name>
        <dbReference type="ChEBI" id="CHEBI:58359"/>
    </ligand>
</feature>
<feature type="binding site" evidence="1">
    <location>
        <position position="402"/>
    </location>
    <ligand>
        <name>L-glutamine</name>
        <dbReference type="ChEBI" id="CHEBI:58359"/>
    </ligand>
</feature>
<feature type="binding site" evidence="1">
    <location>
        <position position="469"/>
    </location>
    <ligand>
        <name>L-glutamine</name>
        <dbReference type="ChEBI" id="CHEBI:58359"/>
    </ligand>
</feature>
<proteinExistence type="inferred from homology"/>
<name>PYRG_LARHH</name>
<keyword id="KW-0067">ATP-binding</keyword>
<keyword id="KW-0315">Glutamine amidotransferase</keyword>
<keyword id="KW-0436">Ligase</keyword>
<keyword id="KW-0460">Magnesium</keyword>
<keyword id="KW-0479">Metal-binding</keyword>
<keyword id="KW-0547">Nucleotide-binding</keyword>
<keyword id="KW-0665">Pyrimidine biosynthesis</keyword>
<keyword id="KW-1185">Reference proteome</keyword>
<sequence>MTKFIFVTGGVVSSLGKGIAAASIAAILESRGLKVTMLKLDPYINVDPGTMSPFQHGEVFVTEDGAETDLDLGHYERFIHAKMKKSNNFTTGQVYESVIAKERRGDYLGGTVQVIPHITDEIKHKVREGAGDVDVAIVEVGGTVGDIESLPFLEAIRQMRSNFGRKNTLYVHLSYVPYIAAAGEIKTKPTQHSVKELREIGIQPDILICRMDRELPQDEKRKIALFCNVEENAVIGCYDADSIYKVPGMLHAQGIDDIICEHLDLSLPPADLSVWNGIIDAIEHPARSVNIAMVGKYVDLTESYKSLSEALKHAGIHTRSEVNIHYIDSEEVERDGCAALKGMDAILVPGGFGKRGVEGKIKAVRYAREHNIPYLGICLGMQMALIEYARDMAGMPGANSTEFDLETDFPVVALIDEWVNHDGKIETRDENSNLGGTMRLGGQECVLESGSLAARIYGAEHIVERHRHRYEVNNHYIDRLEAAGLKISGRSAGAEKLVETIELPNHRWFFACQFHPEFTSTPRDGHPLFKAYVEAALAYQADNK</sequence>
<comment type="function">
    <text evidence="1">Catalyzes the ATP-dependent amination of UTP to CTP with either L-glutamine or ammonia as the source of nitrogen. Regulates intracellular CTP levels through interactions with the four ribonucleotide triphosphates.</text>
</comment>
<comment type="catalytic activity">
    <reaction evidence="1">
        <text>UTP + L-glutamine + ATP + H2O = CTP + L-glutamate + ADP + phosphate + 2 H(+)</text>
        <dbReference type="Rhea" id="RHEA:26426"/>
        <dbReference type="ChEBI" id="CHEBI:15377"/>
        <dbReference type="ChEBI" id="CHEBI:15378"/>
        <dbReference type="ChEBI" id="CHEBI:29985"/>
        <dbReference type="ChEBI" id="CHEBI:30616"/>
        <dbReference type="ChEBI" id="CHEBI:37563"/>
        <dbReference type="ChEBI" id="CHEBI:43474"/>
        <dbReference type="ChEBI" id="CHEBI:46398"/>
        <dbReference type="ChEBI" id="CHEBI:58359"/>
        <dbReference type="ChEBI" id="CHEBI:456216"/>
        <dbReference type="EC" id="6.3.4.2"/>
    </reaction>
</comment>
<comment type="catalytic activity">
    <reaction evidence="1">
        <text>L-glutamine + H2O = L-glutamate + NH4(+)</text>
        <dbReference type="Rhea" id="RHEA:15889"/>
        <dbReference type="ChEBI" id="CHEBI:15377"/>
        <dbReference type="ChEBI" id="CHEBI:28938"/>
        <dbReference type="ChEBI" id="CHEBI:29985"/>
        <dbReference type="ChEBI" id="CHEBI:58359"/>
    </reaction>
</comment>
<comment type="catalytic activity">
    <reaction evidence="1">
        <text>UTP + NH4(+) + ATP = CTP + ADP + phosphate + 2 H(+)</text>
        <dbReference type="Rhea" id="RHEA:16597"/>
        <dbReference type="ChEBI" id="CHEBI:15378"/>
        <dbReference type="ChEBI" id="CHEBI:28938"/>
        <dbReference type="ChEBI" id="CHEBI:30616"/>
        <dbReference type="ChEBI" id="CHEBI:37563"/>
        <dbReference type="ChEBI" id="CHEBI:43474"/>
        <dbReference type="ChEBI" id="CHEBI:46398"/>
        <dbReference type="ChEBI" id="CHEBI:456216"/>
    </reaction>
</comment>
<comment type="activity regulation">
    <text evidence="1">Allosterically activated by GTP, when glutamine is the substrate; GTP has no effect on the reaction when ammonia is the substrate. The allosteric effector GTP functions by stabilizing the protein conformation that binds the tetrahedral intermediate(s) formed during glutamine hydrolysis. Inhibited by the product CTP, via allosteric rather than competitive inhibition.</text>
</comment>
<comment type="pathway">
    <text evidence="1">Pyrimidine metabolism; CTP biosynthesis via de novo pathway; CTP from UDP: step 2/2.</text>
</comment>
<comment type="subunit">
    <text evidence="1">Homotetramer.</text>
</comment>
<comment type="miscellaneous">
    <text evidence="1">CTPSs have evolved a hybrid strategy for distinguishing between UTP and CTP. The overlapping regions of the product feedback inhibitory and substrate sites recognize a common feature in both compounds, the triphosphate moiety. To differentiate isosteric substrate and product pyrimidine rings, an additional pocket far from the expected kinase/ligase catalytic site, specifically recognizes the cytosine and ribose portions of the product inhibitor.</text>
</comment>
<comment type="similarity">
    <text evidence="1">Belongs to the CTP synthase family.</text>
</comment>
<dbReference type="EC" id="6.3.4.2" evidence="1"/>
<dbReference type="EMBL" id="CP001154">
    <property type="protein sequence ID" value="ACO73538.1"/>
    <property type="molecule type" value="Genomic_DNA"/>
</dbReference>
<dbReference type="RefSeq" id="WP_012696030.1">
    <property type="nucleotide sequence ID" value="NC_012559.1"/>
</dbReference>
<dbReference type="SMR" id="C1DCC1"/>
<dbReference type="STRING" id="557598.LHK_00545"/>
<dbReference type="KEGG" id="lhk:LHK_00545"/>
<dbReference type="eggNOG" id="COG0504">
    <property type="taxonomic scope" value="Bacteria"/>
</dbReference>
<dbReference type="HOGENOM" id="CLU_011675_5_0_4"/>
<dbReference type="UniPathway" id="UPA00159">
    <property type="reaction ID" value="UER00277"/>
</dbReference>
<dbReference type="Proteomes" id="UP000002010">
    <property type="component" value="Chromosome"/>
</dbReference>
<dbReference type="GO" id="GO:0005829">
    <property type="term" value="C:cytosol"/>
    <property type="evidence" value="ECO:0007669"/>
    <property type="project" value="TreeGrafter"/>
</dbReference>
<dbReference type="GO" id="GO:0005524">
    <property type="term" value="F:ATP binding"/>
    <property type="evidence" value="ECO:0007669"/>
    <property type="project" value="UniProtKB-KW"/>
</dbReference>
<dbReference type="GO" id="GO:0003883">
    <property type="term" value="F:CTP synthase activity"/>
    <property type="evidence" value="ECO:0007669"/>
    <property type="project" value="UniProtKB-UniRule"/>
</dbReference>
<dbReference type="GO" id="GO:0004359">
    <property type="term" value="F:glutaminase activity"/>
    <property type="evidence" value="ECO:0007669"/>
    <property type="project" value="RHEA"/>
</dbReference>
<dbReference type="GO" id="GO:0042802">
    <property type="term" value="F:identical protein binding"/>
    <property type="evidence" value="ECO:0007669"/>
    <property type="project" value="TreeGrafter"/>
</dbReference>
<dbReference type="GO" id="GO:0046872">
    <property type="term" value="F:metal ion binding"/>
    <property type="evidence" value="ECO:0007669"/>
    <property type="project" value="UniProtKB-KW"/>
</dbReference>
<dbReference type="GO" id="GO:0044210">
    <property type="term" value="P:'de novo' CTP biosynthetic process"/>
    <property type="evidence" value="ECO:0007669"/>
    <property type="project" value="UniProtKB-UniRule"/>
</dbReference>
<dbReference type="GO" id="GO:0019856">
    <property type="term" value="P:pyrimidine nucleobase biosynthetic process"/>
    <property type="evidence" value="ECO:0007669"/>
    <property type="project" value="TreeGrafter"/>
</dbReference>
<dbReference type="CDD" id="cd03113">
    <property type="entry name" value="CTPS_N"/>
    <property type="match status" value="1"/>
</dbReference>
<dbReference type="CDD" id="cd01746">
    <property type="entry name" value="GATase1_CTP_Synthase"/>
    <property type="match status" value="1"/>
</dbReference>
<dbReference type="FunFam" id="3.40.50.300:FF:000009">
    <property type="entry name" value="CTP synthase"/>
    <property type="match status" value="1"/>
</dbReference>
<dbReference type="FunFam" id="3.40.50.880:FF:000002">
    <property type="entry name" value="CTP synthase"/>
    <property type="match status" value="1"/>
</dbReference>
<dbReference type="Gene3D" id="3.40.50.880">
    <property type="match status" value="1"/>
</dbReference>
<dbReference type="Gene3D" id="3.40.50.300">
    <property type="entry name" value="P-loop containing nucleotide triphosphate hydrolases"/>
    <property type="match status" value="1"/>
</dbReference>
<dbReference type="HAMAP" id="MF_01227">
    <property type="entry name" value="PyrG"/>
    <property type="match status" value="1"/>
</dbReference>
<dbReference type="InterPro" id="IPR029062">
    <property type="entry name" value="Class_I_gatase-like"/>
</dbReference>
<dbReference type="InterPro" id="IPR004468">
    <property type="entry name" value="CTP_synthase"/>
</dbReference>
<dbReference type="InterPro" id="IPR017456">
    <property type="entry name" value="CTP_synthase_N"/>
</dbReference>
<dbReference type="InterPro" id="IPR017926">
    <property type="entry name" value="GATASE"/>
</dbReference>
<dbReference type="InterPro" id="IPR033828">
    <property type="entry name" value="GATase1_CTP_Synthase"/>
</dbReference>
<dbReference type="InterPro" id="IPR027417">
    <property type="entry name" value="P-loop_NTPase"/>
</dbReference>
<dbReference type="NCBIfam" id="NF003792">
    <property type="entry name" value="PRK05380.1"/>
    <property type="match status" value="1"/>
</dbReference>
<dbReference type="NCBIfam" id="TIGR00337">
    <property type="entry name" value="PyrG"/>
    <property type="match status" value="1"/>
</dbReference>
<dbReference type="PANTHER" id="PTHR11550">
    <property type="entry name" value="CTP SYNTHASE"/>
    <property type="match status" value="1"/>
</dbReference>
<dbReference type="PANTHER" id="PTHR11550:SF0">
    <property type="entry name" value="CTP SYNTHASE-RELATED"/>
    <property type="match status" value="1"/>
</dbReference>
<dbReference type="Pfam" id="PF06418">
    <property type="entry name" value="CTP_synth_N"/>
    <property type="match status" value="1"/>
</dbReference>
<dbReference type="Pfam" id="PF00117">
    <property type="entry name" value="GATase"/>
    <property type="match status" value="1"/>
</dbReference>
<dbReference type="SUPFAM" id="SSF52317">
    <property type="entry name" value="Class I glutamine amidotransferase-like"/>
    <property type="match status" value="1"/>
</dbReference>
<dbReference type="SUPFAM" id="SSF52540">
    <property type="entry name" value="P-loop containing nucleoside triphosphate hydrolases"/>
    <property type="match status" value="1"/>
</dbReference>
<dbReference type="PROSITE" id="PS51273">
    <property type="entry name" value="GATASE_TYPE_1"/>
    <property type="match status" value="1"/>
</dbReference>
<protein>
    <recommendedName>
        <fullName evidence="1">CTP synthase</fullName>
        <ecNumber evidence="1">6.3.4.2</ecNumber>
    </recommendedName>
    <alternativeName>
        <fullName evidence="1">Cytidine 5'-triphosphate synthase</fullName>
    </alternativeName>
    <alternativeName>
        <fullName evidence="1">Cytidine triphosphate synthetase</fullName>
        <shortName evidence="1">CTP synthetase</shortName>
        <shortName evidence="1">CTPS</shortName>
    </alternativeName>
    <alternativeName>
        <fullName evidence="1">UTP--ammonia ligase</fullName>
    </alternativeName>
</protein>
<gene>
    <name evidence="1" type="primary">pyrG</name>
    <name type="ordered locus">LHK_00545</name>
</gene>
<reference key="1">
    <citation type="journal article" date="2009" name="PLoS Genet.">
        <title>The complete genome and proteome of Laribacter hongkongensis reveal potential mechanisms for adaptations to different temperatures and habitats.</title>
        <authorList>
            <person name="Woo P.C.Y."/>
            <person name="Lau S.K.P."/>
            <person name="Tse H."/>
            <person name="Teng J.L.L."/>
            <person name="Curreem S.O."/>
            <person name="Tsang A.K.L."/>
            <person name="Fan R.Y.Y."/>
            <person name="Wong G.K.M."/>
            <person name="Huang Y."/>
            <person name="Loman N.J."/>
            <person name="Snyder L.A.S."/>
            <person name="Cai J.J."/>
            <person name="Huang J.-D."/>
            <person name="Mak W."/>
            <person name="Pallen M.J."/>
            <person name="Lok S."/>
            <person name="Yuen K.-Y."/>
        </authorList>
    </citation>
    <scope>NUCLEOTIDE SEQUENCE [LARGE SCALE GENOMIC DNA]</scope>
    <source>
        <strain>HLHK9</strain>
    </source>
</reference>